<reference key="1">
    <citation type="journal article" date="2001" name="Genome Res.">
        <title>The complete genome sequence of the lactic acid bacterium Lactococcus lactis ssp. lactis IL1403.</title>
        <authorList>
            <person name="Bolotin A."/>
            <person name="Wincker P."/>
            <person name="Mauger S."/>
            <person name="Jaillon O."/>
            <person name="Malarme K."/>
            <person name="Weissenbach J."/>
            <person name="Ehrlich S.D."/>
            <person name="Sorokin A."/>
        </authorList>
    </citation>
    <scope>NUCLEOTIDE SEQUENCE [LARGE SCALE GENOMIC DNA]</scope>
    <source>
        <strain>IL1403</strain>
    </source>
</reference>
<dbReference type="EC" id="6.3.4.16" evidence="1"/>
<dbReference type="EC" id="6.3.5.5" evidence="1"/>
<dbReference type="EMBL" id="AE005176">
    <property type="protein sequence ID" value="AAK05461.1"/>
    <property type="molecule type" value="Genomic_DNA"/>
</dbReference>
<dbReference type="PIR" id="C86795">
    <property type="entry name" value="C86795"/>
</dbReference>
<dbReference type="RefSeq" id="NP_267519.1">
    <property type="nucleotide sequence ID" value="NC_002662.1"/>
</dbReference>
<dbReference type="RefSeq" id="WP_010905906.1">
    <property type="nucleotide sequence ID" value="NC_002662.1"/>
</dbReference>
<dbReference type="SMR" id="Q9CFV2"/>
<dbReference type="PaxDb" id="272623-L198033"/>
<dbReference type="EnsemblBacteria" id="AAK05461">
    <property type="protein sequence ID" value="AAK05461"/>
    <property type="gene ID" value="L198033"/>
</dbReference>
<dbReference type="KEGG" id="lla:L198033"/>
<dbReference type="PATRIC" id="fig|272623.7.peg.1469"/>
<dbReference type="eggNOG" id="COG0458">
    <property type="taxonomic scope" value="Bacteria"/>
</dbReference>
<dbReference type="HOGENOM" id="CLU_000513_1_0_9"/>
<dbReference type="OrthoDB" id="9804197at2"/>
<dbReference type="UniPathway" id="UPA00068">
    <property type="reaction ID" value="UER00171"/>
</dbReference>
<dbReference type="UniPathway" id="UPA00070">
    <property type="reaction ID" value="UER00115"/>
</dbReference>
<dbReference type="Proteomes" id="UP000002196">
    <property type="component" value="Chromosome"/>
</dbReference>
<dbReference type="GO" id="GO:0005737">
    <property type="term" value="C:cytoplasm"/>
    <property type="evidence" value="ECO:0007669"/>
    <property type="project" value="TreeGrafter"/>
</dbReference>
<dbReference type="GO" id="GO:0005524">
    <property type="term" value="F:ATP binding"/>
    <property type="evidence" value="ECO:0007669"/>
    <property type="project" value="UniProtKB-UniRule"/>
</dbReference>
<dbReference type="GO" id="GO:0004087">
    <property type="term" value="F:carbamoyl-phosphate synthase (ammonia) activity"/>
    <property type="evidence" value="ECO:0007669"/>
    <property type="project" value="RHEA"/>
</dbReference>
<dbReference type="GO" id="GO:0004088">
    <property type="term" value="F:carbamoyl-phosphate synthase (glutamine-hydrolyzing) activity"/>
    <property type="evidence" value="ECO:0007669"/>
    <property type="project" value="UniProtKB-UniRule"/>
</dbReference>
<dbReference type="GO" id="GO:0046872">
    <property type="term" value="F:metal ion binding"/>
    <property type="evidence" value="ECO:0007669"/>
    <property type="project" value="UniProtKB-KW"/>
</dbReference>
<dbReference type="GO" id="GO:0044205">
    <property type="term" value="P:'de novo' UMP biosynthetic process"/>
    <property type="evidence" value="ECO:0007669"/>
    <property type="project" value="UniProtKB-UniRule"/>
</dbReference>
<dbReference type="GO" id="GO:0006541">
    <property type="term" value="P:glutamine metabolic process"/>
    <property type="evidence" value="ECO:0007669"/>
    <property type="project" value="TreeGrafter"/>
</dbReference>
<dbReference type="GO" id="GO:0006526">
    <property type="term" value="P:L-arginine biosynthetic process"/>
    <property type="evidence" value="ECO:0007669"/>
    <property type="project" value="UniProtKB-UniRule"/>
</dbReference>
<dbReference type="CDD" id="cd01424">
    <property type="entry name" value="MGS_CPS_II"/>
    <property type="match status" value="1"/>
</dbReference>
<dbReference type="FunFam" id="1.10.1030.10:FF:000002">
    <property type="entry name" value="Carbamoyl-phosphate synthase large chain"/>
    <property type="match status" value="1"/>
</dbReference>
<dbReference type="FunFam" id="3.30.1490.20:FF:000001">
    <property type="entry name" value="Carbamoyl-phosphate synthase large chain"/>
    <property type="match status" value="1"/>
</dbReference>
<dbReference type="FunFam" id="3.30.470.20:FF:000001">
    <property type="entry name" value="Carbamoyl-phosphate synthase large chain"/>
    <property type="match status" value="1"/>
</dbReference>
<dbReference type="FunFam" id="3.30.470.20:FF:000026">
    <property type="entry name" value="Carbamoyl-phosphate synthase large chain"/>
    <property type="match status" value="1"/>
</dbReference>
<dbReference type="FunFam" id="3.40.50.20:FF:000001">
    <property type="entry name" value="Carbamoyl-phosphate synthase large chain"/>
    <property type="match status" value="1"/>
</dbReference>
<dbReference type="FunFam" id="3.40.50.20:FF:000002">
    <property type="entry name" value="Carbamoyl-phosphate synthase large chain"/>
    <property type="match status" value="1"/>
</dbReference>
<dbReference type="Gene3D" id="3.40.50.20">
    <property type="match status" value="2"/>
</dbReference>
<dbReference type="Gene3D" id="3.30.1490.20">
    <property type="entry name" value="ATP-grasp fold, A domain"/>
    <property type="match status" value="1"/>
</dbReference>
<dbReference type="Gene3D" id="3.30.470.20">
    <property type="entry name" value="ATP-grasp fold, B domain"/>
    <property type="match status" value="2"/>
</dbReference>
<dbReference type="Gene3D" id="1.10.1030.10">
    <property type="entry name" value="Carbamoyl-phosphate synthetase, large subunit oligomerisation domain"/>
    <property type="match status" value="1"/>
</dbReference>
<dbReference type="Gene3D" id="3.40.50.1380">
    <property type="entry name" value="Methylglyoxal synthase-like domain"/>
    <property type="match status" value="1"/>
</dbReference>
<dbReference type="HAMAP" id="MF_01210_A">
    <property type="entry name" value="CPSase_L_chain_A"/>
    <property type="match status" value="1"/>
</dbReference>
<dbReference type="HAMAP" id="MF_01210_B">
    <property type="entry name" value="CPSase_L_chain_B"/>
    <property type="match status" value="1"/>
</dbReference>
<dbReference type="InterPro" id="IPR011761">
    <property type="entry name" value="ATP-grasp"/>
</dbReference>
<dbReference type="InterPro" id="IPR013815">
    <property type="entry name" value="ATP_grasp_subdomain_1"/>
</dbReference>
<dbReference type="InterPro" id="IPR006275">
    <property type="entry name" value="CarbamoylP_synth_lsu"/>
</dbReference>
<dbReference type="InterPro" id="IPR005480">
    <property type="entry name" value="CarbamoylP_synth_lsu_oligo"/>
</dbReference>
<dbReference type="InterPro" id="IPR036897">
    <property type="entry name" value="CarbamoylP_synth_lsu_oligo_sf"/>
</dbReference>
<dbReference type="InterPro" id="IPR005479">
    <property type="entry name" value="CbamoylP_synth_lsu-like_ATP-bd"/>
</dbReference>
<dbReference type="InterPro" id="IPR005483">
    <property type="entry name" value="CbamoylP_synth_lsu_CPSase_dom"/>
</dbReference>
<dbReference type="InterPro" id="IPR011607">
    <property type="entry name" value="MGS-like_dom"/>
</dbReference>
<dbReference type="InterPro" id="IPR036914">
    <property type="entry name" value="MGS-like_dom_sf"/>
</dbReference>
<dbReference type="InterPro" id="IPR033937">
    <property type="entry name" value="MGS_CPS_CarB"/>
</dbReference>
<dbReference type="InterPro" id="IPR016185">
    <property type="entry name" value="PreATP-grasp_dom_sf"/>
</dbReference>
<dbReference type="NCBIfam" id="TIGR01369">
    <property type="entry name" value="CPSaseII_lrg"/>
    <property type="match status" value="1"/>
</dbReference>
<dbReference type="NCBIfam" id="NF003671">
    <property type="entry name" value="PRK05294.1"/>
    <property type="match status" value="1"/>
</dbReference>
<dbReference type="NCBIfam" id="NF009455">
    <property type="entry name" value="PRK12815.1"/>
    <property type="match status" value="1"/>
</dbReference>
<dbReference type="PANTHER" id="PTHR11405:SF53">
    <property type="entry name" value="CARBAMOYL-PHOSPHATE SYNTHASE [AMMONIA], MITOCHONDRIAL"/>
    <property type="match status" value="1"/>
</dbReference>
<dbReference type="PANTHER" id="PTHR11405">
    <property type="entry name" value="CARBAMOYLTRANSFERASE FAMILY MEMBER"/>
    <property type="match status" value="1"/>
</dbReference>
<dbReference type="Pfam" id="PF02786">
    <property type="entry name" value="CPSase_L_D2"/>
    <property type="match status" value="2"/>
</dbReference>
<dbReference type="Pfam" id="PF02787">
    <property type="entry name" value="CPSase_L_D3"/>
    <property type="match status" value="1"/>
</dbReference>
<dbReference type="Pfam" id="PF02142">
    <property type="entry name" value="MGS"/>
    <property type="match status" value="1"/>
</dbReference>
<dbReference type="PRINTS" id="PR00098">
    <property type="entry name" value="CPSASE"/>
</dbReference>
<dbReference type="SMART" id="SM01096">
    <property type="entry name" value="CPSase_L_D3"/>
    <property type="match status" value="1"/>
</dbReference>
<dbReference type="SMART" id="SM00851">
    <property type="entry name" value="MGS"/>
    <property type="match status" value="1"/>
</dbReference>
<dbReference type="SUPFAM" id="SSF48108">
    <property type="entry name" value="Carbamoyl phosphate synthetase, large subunit connection domain"/>
    <property type="match status" value="1"/>
</dbReference>
<dbReference type="SUPFAM" id="SSF56059">
    <property type="entry name" value="Glutathione synthetase ATP-binding domain-like"/>
    <property type="match status" value="2"/>
</dbReference>
<dbReference type="SUPFAM" id="SSF52335">
    <property type="entry name" value="Methylglyoxal synthase-like"/>
    <property type="match status" value="1"/>
</dbReference>
<dbReference type="SUPFAM" id="SSF52440">
    <property type="entry name" value="PreATP-grasp domain"/>
    <property type="match status" value="2"/>
</dbReference>
<dbReference type="PROSITE" id="PS50975">
    <property type="entry name" value="ATP_GRASP"/>
    <property type="match status" value="2"/>
</dbReference>
<dbReference type="PROSITE" id="PS00866">
    <property type="entry name" value="CPSASE_1"/>
    <property type="match status" value="2"/>
</dbReference>
<dbReference type="PROSITE" id="PS00867">
    <property type="entry name" value="CPSASE_2"/>
    <property type="match status" value="2"/>
</dbReference>
<dbReference type="PROSITE" id="PS51855">
    <property type="entry name" value="MGS"/>
    <property type="match status" value="1"/>
</dbReference>
<protein>
    <recommendedName>
        <fullName evidence="1">Carbamoyl phosphate synthase large chain</fullName>
        <ecNumber evidence="1">6.3.4.16</ecNumber>
        <ecNumber evidence="1">6.3.5.5</ecNumber>
    </recommendedName>
    <alternativeName>
        <fullName evidence="1">Carbamoyl phosphate synthetase ammonia chain</fullName>
    </alternativeName>
</protein>
<evidence type="ECO:0000255" key="1">
    <source>
        <dbReference type="HAMAP-Rule" id="MF_01210"/>
    </source>
</evidence>
<proteinExistence type="inferred from homology"/>
<accession>Q9CFV2</accession>
<gene>
    <name evidence="1" type="primary">carB</name>
    <name type="ordered locus">LL1363</name>
    <name type="ORF">L198033</name>
</gene>
<feature type="chain" id="PRO_0000145012" description="Carbamoyl phosphate synthase large chain">
    <location>
        <begin position="1"/>
        <end position="1064"/>
    </location>
</feature>
<feature type="domain" description="ATP-grasp 1" evidence="1">
    <location>
        <begin position="133"/>
        <end position="327"/>
    </location>
</feature>
<feature type="domain" description="ATP-grasp 2" evidence="1">
    <location>
        <begin position="671"/>
        <end position="861"/>
    </location>
</feature>
<feature type="domain" description="MGS-like" evidence="1">
    <location>
        <begin position="930"/>
        <end position="1064"/>
    </location>
</feature>
<feature type="region of interest" description="Carboxyphosphate synthetic domain" evidence="1">
    <location>
        <begin position="1"/>
        <end position="401"/>
    </location>
</feature>
<feature type="region of interest" description="Oligomerization domain" evidence="1">
    <location>
        <begin position="402"/>
        <end position="546"/>
    </location>
</feature>
<feature type="region of interest" description="Carbamoyl phosphate synthetic domain" evidence="1">
    <location>
        <begin position="547"/>
        <end position="929"/>
    </location>
</feature>
<feature type="region of interest" description="Allosteric domain" evidence="1">
    <location>
        <begin position="930"/>
        <end position="1064"/>
    </location>
</feature>
<feature type="binding site" evidence="1">
    <location>
        <position position="129"/>
    </location>
    <ligand>
        <name>ATP</name>
        <dbReference type="ChEBI" id="CHEBI:30616"/>
        <label>1</label>
    </ligand>
</feature>
<feature type="binding site" evidence="1">
    <location>
        <position position="169"/>
    </location>
    <ligand>
        <name>ATP</name>
        <dbReference type="ChEBI" id="CHEBI:30616"/>
        <label>1</label>
    </ligand>
</feature>
<feature type="binding site" evidence="1">
    <location>
        <position position="175"/>
    </location>
    <ligand>
        <name>ATP</name>
        <dbReference type="ChEBI" id="CHEBI:30616"/>
        <label>1</label>
    </ligand>
</feature>
<feature type="binding site" evidence="1">
    <location>
        <position position="176"/>
    </location>
    <ligand>
        <name>ATP</name>
        <dbReference type="ChEBI" id="CHEBI:30616"/>
        <label>1</label>
    </ligand>
</feature>
<feature type="binding site" evidence="1">
    <location>
        <position position="208"/>
    </location>
    <ligand>
        <name>ATP</name>
        <dbReference type="ChEBI" id="CHEBI:30616"/>
        <label>1</label>
    </ligand>
</feature>
<feature type="binding site" evidence="1">
    <location>
        <position position="210"/>
    </location>
    <ligand>
        <name>ATP</name>
        <dbReference type="ChEBI" id="CHEBI:30616"/>
        <label>1</label>
    </ligand>
</feature>
<feature type="binding site" evidence="1">
    <location>
        <position position="215"/>
    </location>
    <ligand>
        <name>ATP</name>
        <dbReference type="ChEBI" id="CHEBI:30616"/>
        <label>1</label>
    </ligand>
</feature>
<feature type="binding site" evidence="1">
    <location>
        <position position="241"/>
    </location>
    <ligand>
        <name>ATP</name>
        <dbReference type="ChEBI" id="CHEBI:30616"/>
        <label>1</label>
    </ligand>
</feature>
<feature type="binding site" evidence="1">
    <location>
        <position position="242"/>
    </location>
    <ligand>
        <name>ATP</name>
        <dbReference type="ChEBI" id="CHEBI:30616"/>
        <label>1</label>
    </ligand>
</feature>
<feature type="binding site" evidence="1">
    <location>
        <position position="243"/>
    </location>
    <ligand>
        <name>ATP</name>
        <dbReference type="ChEBI" id="CHEBI:30616"/>
        <label>1</label>
    </ligand>
</feature>
<feature type="binding site" evidence="1">
    <location>
        <position position="284"/>
    </location>
    <ligand>
        <name>ATP</name>
        <dbReference type="ChEBI" id="CHEBI:30616"/>
        <label>1</label>
    </ligand>
</feature>
<feature type="binding site" evidence="1">
    <location>
        <position position="284"/>
    </location>
    <ligand>
        <name>Mg(2+)</name>
        <dbReference type="ChEBI" id="CHEBI:18420"/>
        <label>1</label>
    </ligand>
</feature>
<feature type="binding site" evidence="1">
    <location>
        <position position="284"/>
    </location>
    <ligand>
        <name>Mn(2+)</name>
        <dbReference type="ChEBI" id="CHEBI:29035"/>
        <label>1</label>
    </ligand>
</feature>
<feature type="binding site" evidence="1">
    <location>
        <position position="298"/>
    </location>
    <ligand>
        <name>ATP</name>
        <dbReference type="ChEBI" id="CHEBI:30616"/>
        <label>1</label>
    </ligand>
</feature>
<feature type="binding site" evidence="1">
    <location>
        <position position="298"/>
    </location>
    <ligand>
        <name>Mg(2+)</name>
        <dbReference type="ChEBI" id="CHEBI:18420"/>
        <label>1</label>
    </ligand>
</feature>
<feature type="binding site" evidence="1">
    <location>
        <position position="298"/>
    </location>
    <ligand>
        <name>Mg(2+)</name>
        <dbReference type="ChEBI" id="CHEBI:18420"/>
        <label>2</label>
    </ligand>
</feature>
<feature type="binding site" evidence="1">
    <location>
        <position position="298"/>
    </location>
    <ligand>
        <name>Mn(2+)</name>
        <dbReference type="ChEBI" id="CHEBI:29035"/>
        <label>1</label>
    </ligand>
</feature>
<feature type="binding site" evidence="1">
    <location>
        <position position="298"/>
    </location>
    <ligand>
        <name>Mn(2+)</name>
        <dbReference type="ChEBI" id="CHEBI:29035"/>
        <label>2</label>
    </ligand>
</feature>
<feature type="binding site" evidence="1">
    <location>
        <position position="300"/>
    </location>
    <ligand>
        <name>Mg(2+)</name>
        <dbReference type="ChEBI" id="CHEBI:18420"/>
        <label>2</label>
    </ligand>
</feature>
<feature type="binding site" evidence="1">
    <location>
        <position position="300"/>
    </location>
    <ligand>
        <name>Mn(2+)</name>
        <dbReference type="ChEBI" id="CHEBI:29035"/>
        <label>2</label>
    </ligand>
</feature>
<feature type="binding site" evidence="1">
    <location>
        <position position="707"/>
    </location>
    <ligand>
        <name>ATP</name>
        <dbReference type="ChEBI" id="CHEBI:30616"/>
        <label>2</label>
    </ligand>
</feature>
<feature type="binding site" evidence="1">
    <location>
        <position position="746"/>
    </location>
    <ligand>
        <name>ATP</name>
        <dbReference type="ChEBI" id="CHEBI:30616"/>
        <label>2</label>
    </ligand>
</feature>
<feature type="binding site" evidence="1">
    <location>
        <position position="748"/>
    </location>
    <ligand>
        <name>ATP</name>
        <dbReference type="ChEBI" id="CHEBI:30616"/>
        <label>2</label>
    </ligand>
</feature>
<feature type="binding site" evidence="1">
    <location>
        <position position="752"/>
    </location>
    <ligand>
        <name>ATP</name>
        <dbReference type="ChEBI" id="CHEBI:30616"/>
        <label>2</label>
    </ligand>
</feature>
<feature type="binding site" evidence="1">
    <location>
        <position position="777"/>
    </location>
    <ligand>
        <name>ATP</name>
        <dbReference type="ChEBI" id="CHEBI:30616"/>
        <label>2</label>
    </ligand>
</feature>
<feature type="binding site" evidence="1">
    <location>
        <position position="778"/>
    </location>
    <ligand>
        <name>ATP</name>
        <dbReference type="ChEBI" id="CHEBI:30616"/>
        <label>2</label>
    </ligand>
</feature>
<feature type="binding site" evidence="1">
    <location>
        <position position="779"/>
    </location>
    <ligand>
        <name>ATP</name>
        <dbReference type="ChEBI" id="CHEBI:30616"/>
        <label>2</label>
    </ligand>
</feature>
<feature type="binding site" evidence="1">
    <location>
        <position position="780"/>
    </location>
    <ligand>
        <name>ATP</name>
        <dbReference type="ChEBI" id="CHEBI:30616"/>
        <label>2</label>
    </ligand>
</feature>
<feature type="binding site" evidence="1">
    <location>
        <position position="820"/>
    </location>
    <ligand>
        <name>ATP</name>
        <dbReference type="ChEBI" id="CHEBI:30616"/>
        <label>2</label>
    </ligand>
</feature>
<feature type="binding site" evidence="1">
    <location>
        <position position="820"/>
    </location>
    <ligand>
        <name>Mg(2+)</name>
        <dbReference type="ChEBI" id="CHEBI:18420"/>
        <label>3</label>
    </ligand>
</feature>
<feature type="binding site" evidence="1">
    <location>
        <position position="820"/>
    </location>
    <ligand>
        <name>Mn(2+)</name>
        <dbReference type="ChEBI" id="CHEBI:29035"/>
        <label>3</label>
    </ligand>
</feature>
<feature type="binding site" evidence="1">
    <location>
        <position position="832"/>
    </location>
    <ligand>
        <name>ATP</name>
        <dbReference type="ChEBI" id="CHEBI:30616"/>
        <label>2</label>
    </ligand>
</feature>
<feature type="binding site" evidence="1">
    <location>
        <position position="832"/>
    </location>
    <ligand>
        <name>Mg(2+)</name>
        <dbReference type="ChEBI" id="CHEBI:18420"/>
        <label>3</label>
    </ligand>
</feature>
<feature type="binding site" evidence="1">
    <location>
        <position position="832"/>
    </location>
    <ligand>
        <name>Mg(2+)</name>
        <dbReference type="ChEBI" id="CHEBI:18420"/>
        <label>4</label>
    </ligand>
</feature>
<feature type="binding site" evidence="1">
    <location>
        <position position="832"/>
    </location>
    <ligand>
        <name>Mn(2+)</name>
        <dbReference type="ChEBI" id="CHEBI:29035"/>
        <label>3</label>
    </ligand>
</feature>
<feature type="binding site" evidence="1">
    <location>
        <position position="832"/>
    </location>
    <ligand>
        <name>Mn(2+)</name>
        <dbReference type="ChEBI" id="CHEBI:29035"/>
        <label>4</label>
    </ligand>
</feature>
<feature type="binding site" evidence="1">
    <location>
        <position position="834"/>
    </location>
    <ligand>
        <name>Mg(2+)</name>
        <dbReference type="ChEBI" id="CHEBI:18420"/>
        <label>4</label>
    </ligand>
</feature>
<feature type="binding site" evidence="1">
    <location>
        <position position="834"/>
    </location>
    <ligand>
        <name>Mn(2+)</name>
        <dbReference type="ChEBI" id="CHEBI:29035"/>
        <label>4</label>
    </ligand>
</feature>
<comment type="function">
    <text evidence="1">Large subunit of the glutamine-dependent carbamoyl phosphate synthetase (CPSase). CPSase catalyzes the formation of carbamoyl phosphate from the ammonia moiety of glutamine, carbonate, and phosphate donated by ATP, constituting the first step of 2 biosynthetic pathways, one leading to arginine and/or urea and the other to pyrimidine nucleotides. The large subunit (synthetase) binds the substrates ammonia (free or transferred from glutamine from the small subunit), hydrogencarbonate and ATP and carries out an ATP-coupled ligase reaction, activating hydrogencarbonate by forming carboxy phosphate which reacts with ammonia to form carbamoyl phosphate.</text>
</comment>
<comment type="catalytic activity">
    <reaction evidence="1">
        <text>hydrogencarbonate + L-glutamine + 2 ATP + H2O = carbamoyl phosphate + L-glutamate + 2 ADP + phosphate + 2 H(+)</text>
        <dbReference type="Rhea" id="RHEA:18633"/>
        <dbReference type="ChEBI" id="CHEBI:15377"/>
        <dbReference type="ChEBI" id="CHEBI:15378"/>
        <dbReference type="ChEBI" id="CHEBI:17544"/>
        <dbReference type="ChEBI" id="CHEBI:29985"/>
        <dbReference type="ChEBI" id="CHEBI:30616"/>
        <dbReference type="ChEBI" id="CHEBI:43474"/>
        <dbReference type="ChEBI" id="CHEBI:58228"/>
        <dbReference type="ChEBI" id="CHEBI:58359"/>
        <dbReference type="ChEBI" id="CHEBI:456216"/>
        <dbReference type="EC" id="6.3.5.5"/>
    </reaction>
</comment>
<comment type="catalytic activity">
    <molecule>Carbamoyl phosphate synthase large chain</molecule>
    <reaction evidence="1">
        <text>hydrogencarbonate + NH4(+) + 2 ATP = carbamoyl phosphate + 2 ADP + phosphate + 2 H(+)</text>
        <dbReference type="Rhea" id="RHEA:18029"/>
        <dbReference type="ChEBI" id="CHEBI:15378"/>
        <dbReference type="ChEBI" id="CHEBI:17544"/>
        <dbReference type="ChEBI" id="CHEBI:28938"/>
        <dbReference type="ChEBI" id="CHEBI:30616"/>
        <dbReference type="ChEBI" id="CHEBI:43474"/>
        <dbReference type="ChEBI" id="CHEBI:58228"/>
        <dbReference type="ChEBI" id="CHEBI:456216"/>
        <dbReference type="EC" id="6.3.4.16"/>
    </reaction>
</comment>
<comment type="cofactor">
    <cofactor evidence="1">
        <name>Mg(2+)</name>
        <dbReference type="ChEBI" id="CHEBI:18420"/>
    </cofactor>
    <cofactor evidence="1">
        <name>Mn(2+)</name>
        <dbReference type="ChEBI" id="CHEBI:29035"/>
    </cofactor>
    <text evidence="1">Binds 4 Mg(2+) or Mn(2+) ions per subunit.</text>
</comment>
<comment type="pathway">
    <text evidence="1">Amino-acid biosynthesis; L-arginine biosynthesis; carbamoyl phosphate from bicarbonate: step 1/1.</text>
</comment>
<comment type="pathway">
    <text evidence="1">Pyrimidine metabolism; UMP biosynthesis via de novo pathway; (S)-dihydroorotate from bicarbonate: step 1/3.</text>
</comment>
<comment type="subunit">
    <text evidence="1">Composed of two chains; the small (or glutamine) chain promotes the hydrolysis of glutamine to ammonia, which is used by the large (or ammonia) chain to synthesize carbamoyl phosphate. Tetramer of heterodimers (alpha,beta)4.</text>
</comment>
<comment type="domain">
    <text evidence="1">The large subunit is composed of 2 ATP-grasp domains that are involved in binding the 2 ATP molecules needed for carbamoyl phosphate synthesis. The N-terminal ATP-grasp domain (referred to as the carboxyphosphate synthetic component) catalyzes the ATP-dependent phosphorylation of hydrogencarbonate to carboxyphosphate and the subsequent nucleophilic attack by ammonia to form a carbamate intermediate. The C-terminal ATP-grasp domain (referred to as the carbamoyl phosphate synthetic component) then catalyzes the phosphorylation of carbamate with the second ATP to form the end product carbamoyl phosphate. The reactive and unstable enzyme intermediates are sequentially channeled from one active site to the next through the interior of the protein over a distance of at least 96 A.</text>
</comment>
<comment type="similarity">
    <text evidence="1">Belongs to the CarB family.</text>
</comment>
<organism>
    <name type="scientific">Lactococcus lactis subsp. lactis (strain IL1403)</name>
    <name type="common">Streptococcus lactis</name>
    <dbReference type="NCBI Taxonomy" id="272623"/>
    <lineage>
        <taxon>Bacteria</taxon>
        <taxon>Bacillati</taxon>
        <taxon>Bacillota</taxon>
        <taxon>Bacilli</taxon>
        <taxon>Lactobacillales</taxon>
        <taxon>Streptococcaceae</taxon>
        <taxon>Lactococcus</taxon>
    </lineage>
</organism>
<name>CARB_LACLA</name>
<sequence length="1064" mass="117660">MPKRNDIKKIMIIGSGPIIIGQAAEFDYAGTQACLALKEEGYEVVLVNSNPATIMTDREIADTVYIEPITLEFVSKILRKERPDALLPTLGGQTGLNMAMELSKIGILEELNVELLGTKLSAIDQAEDRELFKELCERIGEPLCASDIATTVDEAVEIADKIGYPIIVRPAFTMGGTGGGICDTEEELREIVANGLKLSPVTQCLIEESIAGYKEIEYEVMRDSADNAIVVCNMENFDPVGVHTGDSIVFAPSQTLSDNEYQMLRDASLNIIRALKIEGGCNVQLALDPHSYEYRVIEVNPRVSRSSALASKATGYPIAKMSAKIAIGMTLDEIINPVTNKTYAMFEPALDYVVAKIARFPFDKFENGDRHLGTQMKATGEVMAIGRNIEESLLKAVRSLEIGVFHNDLQEAQDADDEILYEKMVKTQDDRLFYVSEAIRRGIPIEEIADLTKIDIFFLDKLLHIVEIEDQLKVNIFEPELLKTAKKNGFSDRQIAKLWNVSPEEVRRRRQENRTIPVYKMVDTCAAEFESSTPYFYSTYEWENESKRSSKEKIIVLGSGPIRIGQGVEFDYATVHCVKALQALGKEAIVINSNPETVSTDFSISDKLYFEPLTFEDVMNIIDLEQPEGVIVQFGGQTAINLAEPLSKAGVKILGTQVEDLDRAEDRDLFEKALQDLEIPQPPGATATNEEEAVANANKIGYPVLIRPSFVLGGRAMEIINNEKDLRDYMNRAVKASPEHPVLVDSYLQGRECEVDAICDGTEVLLPGIMEHIERAGVHSGDSMAVYPPQTFSQEIIDTIVDYTKRLAIGLNCIGMMNIQFVIFEEQVYVIEVNPRASRTVPFLSKVTNIPMAQLATQMILGKNLKDLGYTEGLAETPDMVHVKAPVFSFTKLAKVDSLLGPEMKSTGEAMGSDVTLEKALYKSFEAAKLHMADYGSVLFTVADEDKEETLALAKDFAEIGYSLVATQGTAAFFKENGLYVREVEKLAGGEDEEGTLVEDIRHGRVQAVVNTMGNTRASLTTATDGFRIRQEAISRGIPLFTSLDTVAAILKVMQSRSFTTKNI</sequence>
<keyword id="KW-0028">Amino-acid biosynthesis</keyword>
<keyword id="KW-0055">Arginine biosynthesis</keyword>
<keyword id="KW-0067">ATP-binding</keyword>
<keyword id="KW-0436">Ligase</keyword>
<keyword id="KW-0460">Magnesium</keyword>
<keyword id="KW-0464">Manganese</keyword>
<keyword id="KW-0479">Metal-binding</keyword>
<keyword id="KW-0547">Nucleotide-binding</keyword>
<keyword id="KW-0665">Pyrimidine biosynthesis</keyword>
<keyword id="KW-1185">Reference proteome</keyword>
<keyword id="KW-0677">Repeat</keyword>